<accession>P60266</accession>
<accession>F1CGT5</accession>
<comment type="function">
    <text evidence="4 8 9">Beta toxins bind voltage-independently at site-4 of sodium channels (Nav) and shift the voltage of activation toward more negative potentials thereby affecting sodium channel activation and promoting spontaneous and repetitive firing. This toxin is active only on mammals.</text>
</comment>
<comment type="subcellular location">
    <subcellularLocation>
        <location evidence="8">Secreted</location>
    </subcellularLocation>
</comment>
<comment type="tissue specificity">
    <text evidence="14">Expressed by the venom gland.</text>
</comment>
<comment type="domain">
    <text evidence="12">Has the structural arrangement of an alpha-helix connected to antiparallel beta-sheets by disulfide bonds (CS-alpha/beta).</text>
</comment>
<comment type="mass spectrometry" mass="7601.6" method="Electrospray" evidence="7"/>
<comment type="toxic dose">
    <text evidence="8">LD(50) is 0.12 ug/kg in mouse by intracerebroventricular injection and LD(50) is 115 ug/kg in mouse by subcutaneous injection.</text>
</comment>
<comment type="toxic dose">
    <text evidence="7">LD(100) is 3 ug/kg by intracranial injection into mice.</text>
</comment>
<comment type="similarity">
    <text evidence="12">Belongs to the long (4 C-C) scorpion toxin superfamily. Sodium channel inhibitor family. Beta subfamily.</text>
</comment>
<comment type="caution">
    <text evidence="13">Authors of PubMed:21329715 cite the nucleotide sequence HQ262493 as coding for Css8 (AC P0DL83), but the sequence corresponds to Css4. For this reason, the corresponding cross-reference is indicated in this entry.</text>
</comment>
<evidence type="ECO:0000250" key="1">
    <source>
        <dbReference type="UniProtKB" id="P08900"/>
    </source>
</evidence>
<evidence type="ECO:0000255" key="2">
    <source>
        <dbReference type="PROSITE-ProRule" id="PRU01210"/>
    </source>
</evidence>
<evidence type="ECO:0000269" key="3">
    <source>
    </source>
</evidence>
<evidence type="ECO:0000269" key="4">
    <source>
    </source>
</evidence>
<evidence type="ECO:0000269" key="5">
    <source>
    </source>
</evidence>
<evidence type="ECO:0000269" key="6">
    <source>
    </source>
</evidence>
<evidence type="ECO:0000269" key="7">
    <source>
    </source>
</evidence>
<evidence type="ECO:0000269" key="8">
    <source>
    </source>
</evidence>
<evidence type="ECO:0000269" key="9">
    <source>
    </source>
</evidence>
<evidence type="ECO:0000303" key="10">
    <source>
    </source>
</evidence>
<evidence type="ECO:0000303" key="11">
    <source>
    </source>
</evidence>
<evidence type="ECO:0000305" key="12"/>
<evidence type="ECO:0000305" key="13">
    <source>
    </source>
</evidence>
<evidence type="ECO:0000305" key="14">
    <source>
    </source>
</evidence>
<sequence length="87" mass="9785">MNSLLMITACLALVGTVWAKEGYLVNSYTGCKFECFKLGDNDYCLRECRQQYGKGSGGYCYAFGCWCTHLYEQAVVWPLPNKTCNGK</sequence>
<reference key="1">
    <citation type="journal article" date="2011" name="Toxicon">
        <title>Isolation and molecular cloning of beta-neurotoxins from the venom of the scorpion Centruroides suffusus suffusus.</title>
        <authorList>
            <person name="Espino-Solis G.P."/>
            <person name="Estrada G."/>
            <person name="Olamendi-Portugal T."/>
            <person name="Villegas E."/>
            <person name="Zamudio F."/>
            <person name="Cestele S."/>
            <person name="Possani L.D."/>
            <person name="Corzo G."/>
        </authorList>
    </citation>
    <scope>NUCLEOTIDE SEQUENCE [MRNA]</scope>
    <scope>MASS SPECTROMETRY</scope>
    <scope>TOXIC DOSE</scope>
    <source>
        <tissue>Venom</tissue>
        <tissue>Venom gland</tissue>
    </source>
</reference>
<reference key="2">
    <citation type="journal article" date="1999" name="Eur. J. Biochem.">
        <title>Scorpion toxins specific for Na+-channels.</title>
        <authorList>
            <person name="Possani L.D."/>
            <person name="Becerril B."/>
            <person name="Delepierre M."/>
            <person name="Tytgat J."/>
        </authorList>
    </citation>
    <scope>PROTEIN SEQUENCE OF 20-85</scope>
    <scope>REVIEW</scope>
</reference>
<reference key="3">
    <citation type="journal article" date="1987" name="J. Biol. Chem.">
        <title>Purification and chemical and biological characterizations of seven toxins from the Mexican scorpion, Centruroides suffusus suffusus.</title>
        <authorList>
            <person name="Martin M.-F."/>
            <person name="Garcia Y."/>
            <person name="Perez L.G."/>
            <person name="el Ayeb M."/>
            <person name="Kopeyan C."/>
            <person name="Bechis G."/>
            <person name="Jover E."/>
            <person name="Rochat H."/>
        </authorList>
    </citation>
    <scope>FUNCTION</scope>
    <scope>TOXIC DOSE</scope>
    <scope>SUBCELLULAR LOCATION</scope>
    <source>
        <tissue>Venom</tissue>
    </source>
</reference>
<reference key="4">
    <citation type="journal article" date="1998" name="Neuron">
        <title>Voltage sensor-trapping: enhanced activation of sodium channels by beta-scorpion toxin bound to the S3-S4 loop in domain II.</title>
        <authorList>
            <person name="Cestele S."/>
            <person name="Qu Y."/>
            <person name="Rogers J.C."/>
            <person name="Rochat H."/>
            <person name="Scheuer T."/>
            <person name="Catterall W.A."/>
        </authorList>
    </citation>
    <scope>FUNCTION</scope>
</reference>
<reference key="5">
    <citation type="journal article" date="2001" name="J. Gen. Physiol.">
        <title>Neutralization of gating charges in domain II of the sodium channel alpha subunit enhances voltage-sensor trapping by a beta-scorpion toxin.</title>
        <authorList>
            <person name="Cestele S."/>
            <person name="Scheuer T."/>
            <person name="Mantegazza M."/>
            <person name="Rochat H."/>
            <person name="Catterall W.A."/>
        </authorList>
    </citation>
    <scope>FUNCTION</scope>
</reference>
<reference key="6">
    <citation type="journal article" date="2005" name="J. Biol. Chem.">
        <title>Common features in the functional surface of scorpion beta-toxins and elements that confer specificity for insect and mammalian voltage-gated sodium channels.</title>
        <authorList>
            <person name="Cohen L."/>
            <person name="Karbat I."/>
            <person name="Gilles N."/>
            <person name="Ilan N."/>
            <person name="Benveniste M."/>
            <person name="Gordon D."/>
            <person name="Gurevitz M."/>
        </authorList>
    </citation>
    <scope>MUTAGENESIS OF ASN-26; SER-27; TYR-28; LYS-32; GLU-34; PHE-36; LYS-37; LEU-38; ASP-40; ASN-41; ASP-42; TYR-43; LEU-45; ARG-46; GLU-47; ARG-49; GLN-50; GLN-51; LYS-54; TYR-59; TYR-61; PHE-63; THR-68; TYR-71; GLU-72; GLN-73; VAL-75; VAL-76; TRP-77; PRO-80; ASN-81; THR-83 AND ASN-85</scope>
</reference>
<reference key="7">
    <citation type="journal article" date="2007" name="J. Mol. Biol.">
        <title>X-ray structure and mutagenesis of the scorpion depressant toxin LqhIT2 reveals key determinants crucial for activity and anti-insect selectivity.</title>
        <authorList>
            <person name="Karbat I."/>
            <person name="Turkov M."/>
            <person name="Cohen L."/>
            <person name="Kahn R."/>
            <person name="Gordon D."/>
            <person name="Gurevitz M."/>
            <person name="Frolow F."/>
        </authorList>
    </citation>
    <scope>MUTAGENESIS OF GLU-34</scope>
</reference>
<protein>
    <recommendedName>
        <fullName>Beta-mammal toxin Css4</fullName>
    </recommendedName>
    <alternativeName>
        <fullName evidence="10 11">Css IV</fullName>
        <shortName evidence="12">CssIV</shortName>
    </alternativeName>
</protein>
<feature type="signal peptide" evidence="7">
    <location>
        <begin position="1"/>
        <end position="19"/>
    </location>
</feature>
<feature type="chain" id="PRO_0000066778" description="Beta-mammal toxin Css4" evidence="3">
    <location>
        <begin position="20"/>
        <end position="85"/>
    </location>
</feature>
<feature type="domain" description="LCN-type CS-alpha/beta" evidence="2">
    <location>
        <begin position="20"/>
        <end position="85"/>
    </location>
</feature>
<feature type="site" description="May interact with the receptor site" evidence="5">
    <location>
        <position position="43"/>
    </location>
</feature>
<feature type="site" description="May interact with the receptor site" evidence="5">
    <location>
        <position position="46"/>
    </location>
</feature>
<feature type="site" description="May interact with the receptor site" evidence="5">
    <location>
        <position position="47"/>
    </location>
</feature>
<feature type="site" description="May interact with the receptor site" evidence="5">
    <location>
        <position position="51"/>
    </location>
</feature>
<feature type="modified residue" description="Asparagine amide" evidence="1">
    <location>
        <position position="85"/>
    </location>
</feature>
<feature type="disulfide bond" evidence="2">
    <location>
        <begin position="31"/>
        <end position="84"/>
    </location>
</feature>
<feature type="disulfide bond" evidence="2">
    <location>
        <begin position="35"/>
        <end position="60"/>
    </location>
</feature>
<feature type="disulfide bond" evidence="2">
    <location>
        <begin position="44"/>
        <end position="65"/>
    </location>
</feature>
<feature type="disulfide bond" evidence="2">
    <location>
        <begin position="48"/>
        <end position="67"/>
    </location>
</feature>
<feature type="mutagenesis site" description="Has little effect on the binding affinity to rat sodium channels." evidence="5">
    <original>N</original>
    <variation>A</variation>
    <location>
        <position position="26"/>
    </location>
</feature>
<feature type="mutagenesis site" description="Has little effect on the binding affinity to rat sodium channels." evidence="5">
    <original>S</original>
    <variation>A</variation>
    <location>
        <position position="27"/>
    </location>
</feature>
<feature type="mutagenesis site" description="Has little effect on the binding affinity to rat sodium channels." evidence="5">
    <original>Y</original>
    <variation>A</variation>
    <location>
        <position position="28"/>
    </location>
</feature>
<feature type="mutagenesis site" description="Has little effect on the binding affinity to rat sodium channels." evidence="5">
    <original>K</original>
    <variation>A</variation>
    <location>
        <position position="32"/>
    </location>
</feature>
<feature type="mutagenesis site" description="Induces a marked shift in the voltage dependence of activation of Drosophila DmNav1 (para) channels and a contraction paralysis in blowfly larvae. However, it retains its high affinity for rat brain neuronal membranes and is highly active on the SCN2A (Nav1.2) channel." evidence="5 6">
    <original>E</original>
    <variation>A</variation>
    <location>
        <position position="34"/>
    </location>
</feature>
<feature type="mutagenesis site" description="Has little effect on the binding affinity to rat sodium channels." evidence="5 6">
    <original>E</original>
    <variation>Q</variation>
    <variation>R</variation>
    <location>
        <position position="34"/>
    </location>
</feature>
<feature type="mutagenesis site" description="11.2-fold decrease in binding affinity to rat sodium channels." evidence="5">
    <original>F</original>
    <variation>A</variation>
    <location>
        <position position="36"/>
    </location>
</feature>
<feature type="mutagenesis site" description="Has little effect on the binding affinity to rat sodium channels." evidence="5">
    <original>F</original>
    <variation>W</variation>
    <location>
        <position position="36"/>
    </location>
</feature>
<feature type="mutagenesis site" description="Has little effect on the binding affinity to rat sodium channels." evidence="5">
    <original>K</original>
    <variation>A</variation>
    <location>
        <position position="37"/>
    </location>
</feature>
<feature type="mutagenesis site" description="157-fold decrease in binding affinity to rat sodium channels." evidence="5">
    <original>L</original>
    <variation>A</variation>
    <location>
        <position position="38"/>
    </location>
</feature>
<feature type="mutagenesis site" description="Has little effect on the binding affinity to rat sodium channels." evidence="5">
    <original>L</original>
    <variation>I</variation>
    <location>
        <position position="38"/>
    </location>
</feature>
<feature type="mutagenesis site" description="Has little effect on the binding affinity to rat sodium channels." evidence="5">
    <original>D</original>
    <variation>A</variation>
    <location>
        <position position="40"/>
    </location>
</feature>
<feature type="mutagenesis site" description="649-fold decrease in binding affinity to rat sodium channels." evidence="5">
    <original>N</original>
    <variation>A</variation>
    <location>
        <position position="41"/>
    </location>
</feature>
<feature type="mutagenesis site" description="Has little effect on the binding affinity to rat sodium channels." evidence="5">
    <original>D</original>
    <variation>A</variation>
    <location>
        <position position="42"/>
    </location>
</feature>
<feature type="mutagenesis site" description="886-fold decrease in binding affinity to rat sodium channels." evidence="5">
    <original>Y</original>
    <variation>A</variation>
    <location>
        <position position="43"/>
    </location>
</feature>
<feature type="mutagenesis site" description="Has little effect on the binding affinity to rat sodium channels." evidence="5">
    <original>Y</original>
    <variation>W</variation>
    <location>
        <position position="43"/>
    </location>
</feature>
<feature type="mutagenesis site" description="Has little effect on the binding affinity to rat sodium channels." evidence="5">
    <original>L</original>
    <variation>A</variation>
    <location>
        <position position="45"/>
    </location>
</feature>
<feature type="mutagenesis site" description="30.8-fold decrease in binding affinity to rat sodium channels." evidence="5">
    <original>R</original>
    <variation>A</variation>
    <location>
        <position position="46"/>
    </location>
</feature>
<feature type="mutagenesis site" description="39-fold decrease in binding affinity to rat sodium channels." evidence="5">
    <original>R</original>
    <variation>I</variation>
    <location>
        <position position="46"/>
    </location>
</feature>
<feature type="mutagenesis site" description="14-fold decrease in binding affinity to rat sodium channels." evidence="5">
    <original>R</original>
    <variation>Q</variation>
    <location>
        <position position="46"/>
    </location>
</feature>
<feature type="mutagenesis site" description="648-fold decrease in binding affinity to rat sodium channels." evidence="5">
    <original>E</original>
    <variation>A</variation>
    <location>
        <position position="47"/>
    </location>
</feature>
<feature type="mutagenesis site" description="45-fold decrease in binding affinity to rat sodium channels." evidence="5">
    <original>E</original>
    <variation>L</variation>
    <location>
        <position position="47"/>
    </location>
</feature>
<feature type="mutagenesis site" description="394-fold decrease in binding affinity to rat sodium channels." evidence="5">
    <original>E</original>
    <variation>Q</variation>
    <location>
        <position position="47"/>
    </location>
</feature>
<feature type="mutagenesis site" description="962-fold decrease in binding affinity to rat sodium channels." evidence="5">
    <original>E</original>
    <variation>R</variation>
    <location>
        <position position="47"/>
    </location>
</feature>
<feature type="mutagenesis site" description="Has little effect on the binding affinity to rat sodium channels." evidence="5">
    <original>R</original>
    <variation>A</variation>
    <location>
        <position position="49"/>
    </location>
</feature>
<feature type="mutagenesis site" description="Has little effect on the binding affinity to rat sodium channels." evidence="5">
    <original>Q</original>
    <variation>A</variation>
    <location>
        <position position="50"/>
    </location>
</feature>
<feature type="mutagenesis site" description="10.8-fold decrease in binding affinity to rat sodium channels." evidence="5">
    <original>Q</original>
    <variation>A</variation>
    <location>
        <position position="51"/>
    </location>
</feature>
<feature type="mutagenesis site" description="35.8-fold decrease in binding affinity to rat sodium channels." evidence="5">
    <original>Q</original>
    <variation>W</variation>
    <location>
        <position position="51"/>
    </location>
</feature>
<feature type="mutagenesis site" description="Has little effect on the binding affinity to rat sodium channels." evidence="5">
    <original>K</original>
    <variation>A</variation>
    <location>
        <position position="54"/>
    </location>
</feature>
<feature type="mutagenesis site" description="1451-fold decrease in binding affinity to rat sodium channels." evidence="5">
    <original>Y</original>
    <variation>A</variation>
    <location>
        <position position="59"/>
    </location>
</feature>
<feature type="mutagenesis site" description="1533-fold decrease in binding affinity to rat sodium channels." evidence="5">
    <original>Y</original>
    <variation>A</variation>
    <location>
        <position position="61"/>
    </location>
</feature>
<feature type="mutagenesis site" description="831-fold decrease in binding affinity to rat sodium channels." evidence="5">
    <original>F</original>
    <variation>A</variation>
    <location>
        <position position="63"/>
    </location>
</feature>
<feature type="mutagenesis site" description="Has little effect on the binding affinity to rat sodium channels." evidence="5">
    <original>T</original>
    <variation>A</variation>
    <location>
        <position position="68"/>
    </location>
</feature>
<feature type="mutagenesis site" description="Has little effect on the binding affinity to rat sodium channels." evidence="5">
    <original>Y</original>
    <variation>A</variation>
    <location>
        <position position="71"/>
    </location>
</feature>
<feature type="mutagenesis site" description="Has little effect on the binding affinity to rat sodium channels." evidence="5">
    <original>E</original>
    <variation>A</variation>
    <location>
        <position position="72"/>
    </location>
</feature>
<feature type="mutagenesis site" description="Has little effect on the binding affinity to rat sodium channels." evidence="5">
    <original>Q</original>
    <variation>A</variation>
    <location>
        <position position="73"/>
    </location>
</feature>
<feature type="mutagenesis site" description="Has little effect on the binding affinity to rat sodium channels." evidence="5">
    <original>V</original>
    <variation>A</variation>
    <location>
        <position position="75"/>
    </location>
</feature>
<feature type="mutagenesis site" description="Has little effect on the binding affinity to rat sodium channels." evidence="5">
    <original>V</original>
    <variation>A</variation>
    <location>
        <position position="76"/>
    </location>
</feature>
<feature type="mutagenesis site" description="87-fold decrease in binding affinity to rat sodium channels." evidence="5">
    <original>W</original>
    <variation>A</variation>
    <location>
        <position position="77"/>
    </location>
</feature>
<feature type="mutagenesis site" description="Has little effect on the binding affinity to rat sodium channels." evidence="5">
    <original>P</original>
    <variation>G</variation>
    <location>
        <position position="80"/>
    </location>
</feature>
<feature type="mutagenesis site" description="Has little effect on the binding affinity to rat sodium channels." evidence="5">
    <original>N</original>
    <variation>A</variation>
    <location>
        <position position="81"/>
    </location>
</feature>
<feature type="mutagenesis site" description="Has little effect on the binding affinity to rat sodium channels." evidence="5">
    <original>T</original>
    <variation>A</variation>
    <location>
        <position position="83"/>
    </location>
</feature>
<feature type="mutagenesis site" description="Has little effect on the binding affinity to rat sodium channels." evidence="5">
    <original>N</original>
    <variation>A</variation>
    <location>
        <position position="85"/>
    </location>
</feature>
<organism>
    <name type="scientific">Centruroides suffusus</name>
    <name type="common">Durango bark scorpion</name>
    <dbReference type="NCBI Taxonomy" id="6880"/>
    <lineage>
        <taxon>Eukaryota</taxon>
        <taxon>Metazoa</taxon>
        <taxon>Ecdysozoa</taxon>
        <taxon>Arthropoda</taxon>
        <taxon>Chelicerata</taxon>
        <taxon>Arachnida</taxon>
        <taxon>Scorpiones</taxon>
        <taxon>Buthida</taxon>
        <taxon>Buthoidea</taxon>
        <taxon>Buthidae</taxon>
        <taxon>Centruroides</taxon>
    </lineage>
</organism>
<dbReference type="EMBL" id="HQ262493">
    <property type="protein sequence ID" value="ADY17425.1"/>
    <property type="molecule type" value="mRNA"/>
</dbReference>
<dbReference type="SMR" id="P60266"/>
<dbReference type="TCDB" id="8.B.1.2.2">
    <property type="family name" value="the long (4c-c) scorpion toxin (l-st) superfamily"/>
</dbReference>
<dbReference type="GO" id="GO:0005576">
    <property type="term" value="C:extracellular region"/>
    <property type="evidence" value="ECO:0007669"/>
    <property type="project" value="UniProtKB-SubCell"/>
</dbReference>
<dbReference type="GO" id="GO:0019871">
    <property type="term" value="F:sodium channel inhibitor activity"/>
    <property type="evidence" value="ECO:0007669"/>
    <property type="project" value="InterPro"/>
</dbReference>
<dbReference type="GO" id="GO:0090729">
    <property type="term" value="F:toxin activity"/>
    <property type="evidence" value="ECO:0007669"/>
    <property type="project" value="UniProtKB-KW"/>
</dbReference>
<dbReference type="GO" id="GO:0006952">
    <property type="term" value="P:defense response"/>
    <property type="evidence" value="ECO:0007669"/>
    <property type="project" value="InterPro"/>
</dbReference>
<dbReference type="CDD" id="cd23106">
    <property type="entry name" value="neurotoxins_LC_scorpion"/>
    <property type="match status" value="1"/>
</dbReference>
<dbReference type="FunFam" id="3.30.30.10:FF:000002">
    <property type="entry name" value="Alpha-like toxin BmK-M1"/>
    <property type="match status" value="1"/>
</dbReference>
<dbReference type="Gene3D" id="3.30.30.10">
    <property type="entry name" value="Knottin, scorpion toxin-like"/>
    <property type="match status" value="1"/>
</dbReference>
<dbReference type="InterPro" id="IPR044062">
    <property type="entry name" value="LCN-type_CS_alpha_beta_dom"/>
</dbReference>
<dbReference type="InterPro" id="IPR003614">
    <property type="entry name" value="Scorpion_toxin-like"/>
</dbReference>
<dbReference type="InterPro" id="IPR036574">
    <property type="entry name" value="Scorpion_toxin-like_sf"/>
</dbReference>
<dbReference type="InterPro" id="IPR018218">
    <property type="entry name" value="Scorpion_toxinL"/>
</dbReference>
<dbReference type="PRINTS" id="PR00285">
    <property type="entry name" value="SCORPNTOXIN"/>
</dbReference>
<dbReference type="SMART" id="SM00505">
    <property type="entry name" value="Knot1"/>
    <property type="match status" value="1"/>
</dbReference>
<dbReference type="SUPFAM" id="SSF57095">
    <property type="entry name" value="Scorpion toxin-like"/>
    <property type="match status" value="1"/>
</dbReference>
<dbReference type="PROSITE" id="PS51863">
    <property type="entry name" value="LCN_CSAB"/>
    <property type="match status" value="1"/>
</dbReference>
<keyword id="KW-0027">Amidation</keyword>
<keyword id="KW-0903">Direct protein sequencing</keyword>
<keyword id="KW-1015">Disulfide bond</keyword>
<keyword id="KW-0872">Ion channel impairing toxin</keyword>
<keyword id="KW-0528">Neurotoxin</keyword>
<keyword id="KW-0964">Secreted</keyword>
<keyword id="KW-0732">Signal</keyword>
<keyword id="KW-0800">Toxin</keyword>
<keyword id="KW-0738">Voltage-gated sodium channel impairing toxin</keyword>
<proteinExistence type="evidence at protein level"/>
<name>SCX4_CENSU</name>